<comment type="function">
    <text evidence="1">Catalyzes the NADPH-dependent reduction of glyoxylate and hydroxypyruvate into glycolate and glycerate, respectively.</text>
</comment>
<comment type="catalytic activity">
    <reaction evidence="1">
        <text>glycolate + NADP(+) = glyoxylate + NADPH + H(+)</text>
        <dbReference type="Rhea" id="RHEA:10992"/>
        <dbReference type="ChEBI" id="CHEBI:15378"/>
        <dbReference type="ChEBI" id="CHEBI:29805"/>
        <dbReference type="ChEBI" id="CHEBI:36655"/>
        <dbReference type="ChEBI" id="CHEBI:57783"/>
        <dbReference type="ChEBI" id="CHEBI:58349"/>
        <dbReference type="EC" id="1.1.1.79"/>
    </reaction>
</comment>
<comment type="catalytic activity">
    <reaction evidence="1">
        <text>(R)-glycerate + NAD(+) = 3-hydroxypyruvate + NADH + H(+)</text>
        <dbReference type="Rhea" id="RHEA:17905"/>
        <dbReference type="ChEBI" id="CHEBI:15378"/>
        <dbReference type="ChEBI" id="CHEBI:16659"/>
        <dbReference type="ChEBI" id="CHEBI:17180"/>
        <dbReference type="ChEBI" id="CHEBI:57540"/>
        <dbReference type="ChEBI" id="CHEBI:57945"/>
        <dbReference type="EC" id="1.1.1.81"/>
    </reaction>
</comment>
<comment type="catalytic activity">
    <reaction evidence="1">
        <text>(R)-glycerate + NADP(+) = 3-hydroxypyruvate + NADPH + H(+)</text>
        <dbReference type="Rhea" id="RHEA:18657"/>
        <dbReference type="ChEBI" id="CHEBI:15378"/>
        <dbReference type="ChEBI" id="CHEBI:16659"/>
        <dbReference type="ChEBI" id="CHEBI:17180"/>
        <dbReference type="ChEBI" id="CHEBI:57783"/>
        <dbReference type="ChEBI" id="CHEBI:58349"/>
        <dbReference type="EC" id="1.1.1.81"/>
    </reaction>
</comment>
<comment type="subcellular location">
    <subcellularLocation>
        <location evidence="1">Cytoplasm</location>
    </subcellularLocation>
</comment>
<comment type="similarity">
    <text evidence="1">Belongs to the D-isomer specific 2-hydroxyacid dehydrogenase family. GhrA subfamily.</text>
</comment>
<evidence type="ECO:0000255" key="1">
    <source>
        <dbReference type="HAMAP-Rule" id="MF_01666"/>
    </source>
</evidence>
<proteinExistence type="inferred from homology"/>
<organism>
    <name type="scientific">Escherichia coli O45:K1 (strain S88 / ExPEC)</name>
    <dbReference type="NCBI Taxonomy" id="585035"/>
    <lineage>
        <taxon>Bacteria</taxon>
        <taxon>Pseudomonadati</taxon>
        <taxon>Pseudomonadota</taxon>
        <taxon>Gammaproteobacteria</taxon>
        <taxon>Enterobacterales</taxon>
        <taxon>Enterobacteriaceae</taxon>
        <taxon>Escherichia</taxon>
    </lineage>
</organism>
<protein>
    <recommendedName>
        <fullName evidence="1">Glyoxylate/hydroxypyruvate reductase A</fullName>
        <ecNumber evidence="1">1.1.1.79</ecNumber>
        <ecNumber evidence="1">1.1.1.81</ecNumber>
    </recommendedName>
    <alternativeName>
        <fullName evidence="1">2-ketoacid reductase</fullName>
    </alternativeName>
</protein>
<accession>B7MIH3</accession>
<feature type="chain" id="PRO_1000187263" description="Glyoxylate/hydroxypyruvate reductase A">
    <location>
        <begin position="1"/>
        <end position="312"/>
    </location>
</feature>
<feature type="active site" evidence="1">
    <location>
        <position position="227"/>
    </location>
</feature>
<feature type="active site" description="Proton donor" evidence="1">
    <location>
        <position position="275"/>
    </location>
</feature>
<dbReference type="EC" id="1.1.1.79" evidence="1"/>
<dbReference type="EC" id="1.1.1.81" evidence="1"/>
<dbReference type="EMBL" id="CU928161">
    <property type="protein sequence ID" value="CAR02373.1"/>
    <property type="molecule type" value="Genomic_DNA"/>
</dbReference>
<dbReference type="RefSeq" id="WP_000351298.1">
    <property type="nucleotide sequence ID" value="NC_011742.1"/>
</dbReference>
<dbReference type="SMR" id="B7MIH3"/>
<dbReference type="KEGG" id="ecz:ECS88_1044"/>
<dbReference type="HOGENOM" id="CLU_019796_1_0_6"/>
<dbReference type="Proteomes" id="UP000000747">
    <property type="component" value="Chromosome"/>
</dbReference>
<dbReference type="GO" id="GO:0005829">
    <property type="term" value="C:cytosol"/>
    <property type="evidence" value="ECO:0007669"/>
    <property type="project" value="UniProtKB-ARBA"/>
</dbReference>
<dbReference type="GO" id="GO:0030267">
    <property type="term" value="F:glyoxylate reductase (NADPH) activity"/>
    <property type="evidence" value="ECO:0007669"/>
    <property type="project" value="UniProtKB-UniRule"/>
</dbReference>
<dbReference type="GO" id="GO:0008465">
    <property type="term" value="F:hydroxypyruvate reductase (NADH) activity"/>
    <property type="evidence" value="ECO:0007669"/>
    <property type="project" value="RHEA"/>
</dbReference>
<dbReference type="GO" id="GO:0120509">
    <property type="term" value="F:hydroxypyruvate reductase (NADPH) activity"/>
    <property type="evidence" value="ECO:0007669"/>
    <property type="project" value="RHEA"/>
</dbReference>
<dbReference type="GO" id="GO:0051287">
    <property type="term" value="F:NAD binding"/>
    <property type="evidence" value="ECO:0007669"/>
    <property type="project" value="InterPro"/>
</dbReference>
<dbReference type="CDD" id="cd12164">
    <property type="entry name" value="GDH_like_2"/>
    <property type="match status" value="1"/>
</dbReference>
<dbReference type="FunFam" id="3.40.50.720:FF:000110">
    <property type="entry name" value="Glyoxylate/hydroxypyruvate reductase A"/>
    <property type="match status" value="1"/>
</dbReference>
<dbReference type="Gene3D" id="3.40.50.720">
    <property type="entry name" value="NAD(P)-binding Rossmann-like Domain"/>
    <property type="match status" value="2"/>
</dbReference>
<dbReference type="HAMAP" id="MF_01666">
    <property type="entry name" value="2_Hacid_dh_C_GhrA"/>
    <property type="match status" value="1"/>
</dbReference>
<dbReference type="InterPro" id="IPR029753">
    <property type="entry name" value="D-isomer_DH_CS"/>
</dbReference>
<dbReference type="InterPro" id="IPR006140">
    <property type="entry name" value="D-isomer_DH_NAD-bd"/>
</dbReference>
<dbReference type="InterPro" id="IPR023514">
    <property type="entry name" value="GhrA_Enterobacterales"/>
</dbReference>
<dbReference type="InterPro" id="IPR036291">
    <property type="entry name" value="NAD(P)-bd_dom_sf"/>
</dbReference>
<dbReference type="NCBIfam" id="NF012013">
    <property type="entry name" value="PRK15469.1"/>
    <property type="match status" value="1"/>
</dbReference>
<dbReference type="PANTHER" id="PTHR43333">
    <property type="entry name" value="2-HACID_DH_C DOMAIN-CONTAINING PROTEIN"/>
    <property type="match status" value="1"/>
</dbReference>
<dbReference type="PANTHER" id="PTHR43333:SF1">
    <property type="entry name" value="D-ISOMER SPECIFIC 2-HYDROXYACID DEHYDROGENASE NAD-BINDING DOMAIN-CONTAINING PROTEIN"/>
    <property type="match status" value="1"/>
</dbReference>
<dbReference type="Pfam" id="PF02826">
    <property type="entry name" value="2-Hacid_dh_C"/>
    <property type="match status" value="1"/>
</dbReference>
<dbReference type="SUPFAM" id="SSF51735">
    <property type="entry name" value="NAD(P)-binding Rossmann-fold domains"/>
    <property type="match status" value="1"/>
</dbReference>
<dbReference type="PROSITE" id="PS00671">
    <property type="entry name" value="D_2_HYDROXYACID_DH_3"/>
    <property type="match status" value="1"/>
</dbReference>
<sequence length="312" mass="35372">MDIIFYHPTFDTQWWIEALRKAIPQARVRAWKSGDNDSADYALVWHPPVEMLAGRDLKAVFALGAGVDSILSKLQAHPEMLKPSVPLFRLEDTGMGEQMQEYAVSQVLHWFRRFDDYRIQQNSSHWQPLPEYHREDFTIGILGAGVLGSKVAQSLQTWRFPLRCWSRTRKSWPGVQSFAGREELSAFLSQCRVLINLLPNTPETVGIINQQLLEKLPDGAYLLNLARGVHVVEDDLLAALDSGKVKGAMLDVFNREPLPPESPLWQHPRVTITPHVAAITRPAEAVEYISRTIAQLEKGERLCGQVDRARGY</sequence>
<reference key="1">
    <citation type="journal article" date="2009" name="PLoS Genet.">
        <title>Organised genome dynamics in the Escherichia coli species results in highly diverse adaptive paths.</title>
        <authorList>
            <person name="Touchon M."/>
            <person name="Hoede C."/>
            <person name="Tenaillon O."/>
            <person name="Barbe V."/>
            <person name="Baeriswyl S."/>
            <person name="Bidet P."/>
            <person name="Bingen E."/>
            <person name="Bonacorsi S."/>
            <person name="Bouchier C."/>
            <person name="Bouvet O."/>
            <person name="Calteau A."/>
            <person name="Chiapello H."/>
            <person name="Clermont O."/>
            <person name="Cruveiller S."/>
            <person name="Danchin A."/>
            <person name="Diard M."/>
            <person name="Dossat C."/>
            <person name="Karoui M.E."/>
            <person name="Frapy E."/>
            <person name="Garry L."/>
            <person name="Ghigo J.M."/>
            <person name="Gilles A.M."/>
            <person name="Johnson J."/>
            <person name="Le Bouguenec C."/>
            <person name="Lescat M."/>
            <person name="Mangenot S."/>
            <person name="Martinez-Jehanne V."/>
            <person name="Matic I."/>
            <person name="Nassif X."/>
            <person name="Oztas S."/>
            <person name="Petit M.A."/>
            <person name="Pichon C."/>
            <person name="Rouy Z."/>
            <person name="Ruf C.S."/>
            <person name="Schneider D."/>
            <person name="Tourret J."/>
            <person name="Vacherie B."/>
            <person name="Vallenet D."/>
            <person name="Medigue C."/>
            <person name="Rocha E.P.C."/>
            <person name="Denamur E."/>
        </authorList>
    </citation>
    <scope>NUCLEOTIDE SEQUENCE [LARGE SCALE GENOMIC DNA]</scope>
    <source>
        <strain>S88 / ExPEC</strain>
    </source>
</reference>
<name>GHRA_ECO45</name>
<gene>
    <name evidence="1" type="primary">ghrA</name>
    <name type="ordered locus">ECS88_1044</name>
</gene>
<keyword id="KW-0963">Cytoplasm</keyword>
<keyword id="KW-0520">NAD</keyword>
<keyword id="KW-0521">NADP</keyword>
<keyword id="KW-0560">Oxidoreductase</keyword>
<keyword id="KW-1185">Reference proteome</keyword>